<protein>
    <recommendedName>
        <fullName>U4-theraphotoxin-Hhn1l</fullName>
        <shortName>U4-TRTX-Hhn1l</shortName>
    </recommendedName>
    <alternativeName>
        <fullName>Hainantoxin-II-20</fullName>
        <shortName>HNTX-II-20</shortName>
    </alternativeName>
</protein>
<evidence type="ECO:0000250" key="1"/>
<evidence type="ECO:0000255" key="2"/>
<evidence type="ECO:0000305" key="3"/>
<keyword id="KW-1015">Disulfide bond</keyword>
<keyword id="KW-0528">Neurotoxin</keyword>
<keyword id="KW-0629">Postsynaptic neurotoxin</keyword>
<keyword id="KW-0964">Secreted</keyword>
<keyword id="KW-0732">Signal</keyword>
<keyword id="KW-0800">Toxin</keyword>
<proteinExistence type="inferred from homology"/>
<comment type="function">
    <text evidence="1">Postsynaptic neurotoxin.</text>
</comment>
<comment type="subcellular location">
    <subcellularLocation>
        <location evidence="1">Secreted</location>
    </subcellularLocation>
</comment>
<comment type="tissue specificity">
    <text>Expressed by the venom gland.</text>
</comment>
<comment type="similarity">
    <text evidence="3">Belongs to the neurotoxin 12 (Hwtx-2) family. 02 (Hwtx-2) subfamily.</text>
</comment>
<reference key="1">
    <citation type="journal article" date="2010" name="J. Proteome Res.">
        <title>Molecular diversification of peptide toxins from the tarantula Haplopelma hainanum (Ornithoctonus hainana) venom based on transcriptomic, peptidomic, and genomic analyses.</title>
        <authorList>
            <person name="Tang X."/>
            <person name="Zhang Y."/>
            <person name="Hu W."/>
            <person name="Xu D."/>
            <person name="Tao H."/>
            <person name="Yang X."/>
            <person name="Li Y."/>
            <person name="Jiang L."/>
            <person name="Liang S."/>
        </authorList>
    </citation>
    <scope>NUCLEOTIDE SEQUENCE [LARGE SCALE GENOMIC DNA]</scope>
    <source>
        <tissue>Venom gland</tissue>
    </source>
</reference>
<feature type="signal peptide" evidence="2">
    <location>
        <begin position="1"/>
        <end position="22"/>
    </location>
</feature>
<feature type="propeptide" id="PRO_0000400807" evidence="1">
    <location>
        <begin position="23"/>
        <end position="48"/>
    </location>
</feature>
<feature type="peptide" id="PRO_0000400808" description="U4-theraphotoxin-Hhn1l">
    <location>
        <begin position="49"/>
        <end position="85"/>
    </location>
</feature>
<feature type="disulfide bond" evidence="1">
    <location>
        <begin position="52"/>
        <end position="66"/>
    </location>
</feature>
<feature type="disulfide bond" evidence="1">
    <location>
        <begin position="56"/>
        <end position="77"/>
    </location>
</feature>
<feature type="disulfide bond" evidence="1">
    <location>
        <begin position="71"/>
        <end position="82"/>
    </location>
</feature>
<organism>
    <name type="scientific">Cyriopagopus hainanus</name>
    <name type="common">Chinese bird spider</name>
    <name type="synonym">Haplopelma hainanum</name>
    <dbReference type="NCBI Taxonomy" id="209901"/>
    <lineage>
        <taxon>Eukaryota</taxon>
        <taxon>Metazoa</taxon>
        <taxon>Ecdysozoa</taxon>
        <taxon>Arthropoda</taxon>
        <taxon>Chelicerata</taxon>
        <taxon>Arachnida</taxon>
        <taxon>Araneae</taxon>
        <taxon>Mygalomorphae</taxon>
        <taxon>Theraphosidae</taxon>
        <taxon>Haplopelma</taxon>
    </lineage>
</organism>
<dbReference type="EMBL" id="GU293070">
    <property type="protein sequence ID" value="ADB56886.1"/>
    <property type="molecule type" value="Genomic_DNA"/>
</dbReference>
<dbReference type="SMR" id="D2Y2J3"/>
<dbReference type="ArachnoServer" id="AS001858">
    <property type="toxin name" value="U4-theraphotoxin-Hhn1l"/>
</dbReference>
<dbReference type="GO" id="GO:0005576">
    <property type="term" value="C:extracellular region"/>
    <property type="evidence" value="ECO:0007669"/>
    <property type="project" value="UniProtKB-SubCell"/>
</dbReference>
<dbReference type="GO" id="GO:0035792">
    <property type="term" value="C:host cell postsynaptic membrane"/>
    <property type="evidence" value="ECO:0007669"/>
    <property type="project" value="UniProtKB-KW"/>
</dbReference>
<dbReference type="GO" id="GO:0090729">
    <property type="term" value="F:toxin activity"/>
    <property type="evidence" value="ECO:0007669"/>
    <property type="project" value="UniProtKB-KW"/>
</dbReference>
<dbReference type="InterPro" id="IPR012625">
    <property type="entry name" value="Hwtx-2-like"/>
</dbReference>
<dbReference type="Pfam" id="PF08089">
    <property type="entry name" value="Toxin_20"/>
    <property type="match status" value="1"/>
</dbReference>
<dbReference type="SUPFAM" id="SSF57059">
    <property type="entry name" value="omega toxin-like"/>
    <property type="match status" value="1"/>
</dbReference>
<dbReference type="PROSITE" id="PS60022">
    <property type="entry name" value="HWTX_2"/>
    <property type="match status" value="1"/>
</dbReference>
<name>H2T01_CYRHA</name>
<accession>D2Y2J3</accession>
<sequence>MKVTLIAFLTCAAVLVLHTTAAEELEAESQLMGVGMPDTELAAVDEERLFECSVSCEIEKEGNKDCKKKKCKGGWKCKSNMCVKV</sequence>